<evidence type="ECO:0000255" key="1">
    <source>
        <dbReference type="HAMAP-Rule" id="MF_01007"/>
    </source>
</evidence>
<keyword id="KW-0963">Cytoplasm</keyword>
<keyword id="KW-0489">Methyltransferase</keyword>
<keyword id="KW-1185">Reference proteome</keyword>
<keyword id="KW-0698">rRNA processing</keyword>
<keyword id="KW-0949">S-adenosyl-L-methionine</keyword>
<keyword id="KW-0808">Transferase</keyword>
<comment type="function">
    <text evidence="1">Specifically methylates the N4 position of cytidine in position 1402 (C1402) of 16S rRNA.</text>
</comment>
<comment type="catalytic activity">
    <reaction evidence="1">
        <text>cytidine(1402) in 16S rRNA + S-adenosyl-L-methionine = N(4)-methylcytidine(1402) in 16S rRNA + S-adenosyl-L-homocysteine + H(+)</text>
        <dbReference type="Rhea" id="RHEA:42928"/>
        <dbReference type="Rhea" id="RHEA-COMP:10286"/>
        <dbReference type="Rhea" id="RHEA-COMP:10287"/>
        <dbReference type="ChEBI" id="CHEBI:15378"/>
        <dbReference type="ChEBI" id="CHEBI:57856"/>
        <dbReference type="ChEBI" id="CHEBI:59789"/>
        <dbReference type="ChEBI" id="CHEBI:74506"/>
        <dbReference type="ChEBI" id="CHEBI:82748"/>
        <dbReference type="EC" id="2.1.1.199"/>
    </reaction>
</comment>
<comment type="subcellular location">
    <subcellularLocation>
        <location evidence="1">Cytoplasm</location>
    </subcellularLocation>
</comment>
<comment type="similarity">
    <text evidence="1">Belongs to the methyltransferase superfamily. RsmH family.</text>
</comment>
<proteinExistence type="inferred from homology"/>
<feature type="chain" id="PRO_0000386706" description="Ribosomal RNA small subunit methyltransferase H 1">
    <location>
        <begin position="1"/>
        <end position="311"/>
    </location>
</feature>
<feature type="binding site" evidence="1">
    <location>
        <begin position="33"/>
        <end position="35"/>
    </location>
    <ligand>
        <name>S-adenosyl-L-methionine</name>
        <dbReference type="ChEBI" id="CHEBI:59789"/>
    </ligand>
</feature>
<feature type="binding site" evidence="1">
    <location>
        <position position="53"/>
    </location>
    <ligand>
        <name>S-adenosyl-L-methionine</name>
        <dbReference type="ChEBI" id="CHEBI:59789"/>
    </ligand>
</feature>
<feature type="binding site" evidence="1">
    <location>
        <position position="80"/>
    </location>
    <ligand>
        <name>S-adenosyl-L-methionine</name>
        <dbReference type="ChEBI" id="CHEBI:59789"/>
    </ligand>
</feature>
<feature type="binding site" evidence="1">
    <location>
        <position position="101"/>
    </location>
    <ligand>
        <name>S-adenosyl-L-methionine</name>
        <dbReference type="ChEBI" id="CHEBI:59789"/>
    </ligand>
</feature>
<feature type="binding site" evidence="1">
    <location>
        <position position="108"/>
    </location>
    <ligand>
        <name>S-adenosyl-L-methionine</name>
        <dbReference type="ChEBI" id="CHEBI:59789"/>
    </ligand>
</feature>
<protein>
    <recommendedName>
        <fullName evidence="1">Ribosomal RNA small subunit methyltransferase H 1</fullName>
        <ecNumber evidence="1">2.1.1.199</ecNumber>
    </recommendedName>
    <alternativeName>
        <fullName evidence="1">16S rRNA m(4)C1402 methyltransferase 1</fullName>
    </alternativeName>
    <alternativeName>
        <fullName evidence="1">rRNA (cytosine-N(4)-)-methyltransferase RsmH 1</fullName>
    </alternativeName>
</protein>
<reference key="1">
    <citation type="journal article" date="2016" name="Genome Announc.">
        <title>Complete genome sequence of Alkaliphilus metalliredigens strain QYMF, an alkaliphilic and metal-reducing bacterium isolated from borax-contaminated leachate ponds.</title>
        <authorList>
            <person name="Hwang C."/>
            <person name="Copeland A."/>
            <person name="Lucas S."/>
            <person name="Lapidus A."/>
            <person name="Barry K."/>
            <person name="Detter J.C."/>
            <person name="Glavina Del Rio T."/>
            <person name="Hammon N."/>
            <person name="Israni S."/>
            <person name="Dalin E."/>
            <person name="Tice H."/>
            <person name="Pitluck S."/>
            <person name="Chertkov O."/>
            <person name="Brettin T."/>
            <person name="Bruce D."/>
            <person name="Han C."/>
            <person name="Schmutz J."/>
            <person name="Larimer F."/>
            <person name="Land M.L."/>
            <person name="Hauser L."/>
            <person name="Kyrpides N."/>
            <person name="Mikhailova N."/>
            <person name="Ye Q."/>
            <person name="Zhou J."/>
            <person name="Richardson P."/>
            <person name="Fields M.W."/>
        </authorList>
    </citation>
    <scope>NUCLEOTIDE SEQUENCE [LARGE SCALE GENOMIC DNA]</scope>
    <source>
        <strain>QYMF</strain>
    </source>
</reference>
<gene>
    <name evidence="1" type="primary">rsmH1</name>
    <name type="synonym">mraW1</name>
    <name type="ordered locus">Amet_2887</name>
</gene>
<name>RSMH1_ALKMQ</name>
<accession>A6TS69</accession>
<organism>
    <name type="scientific">Alkaliphilus metalliredigens (strain QYMF)</name>
    <dbReference type="NCBI Taxonomy" id="293826"/>
    <lineage>
        <taxon>Bacteria</taxon>
        <taxon>Bacillati</taxon>
        <taxon>Bacillota</taxon>
        <taxon>Clostridia</taxon>
        <taxon>Peptostreptococcales</taxon>
        <taxon>Natronincolaceae</taxon>
        <taxon>Alkaliphilus</taxon>
    </lineage>
</organism>
<sequence>MNFEHTSVLLKECIEALDIKENGIYVDGTLGGAGHSQEILKVLGKEGLLIGIDQDENALSAAGERLEEHGTKVKLVHDNFHNLDKILENLEITTIDGVLLDLGVSSHQLDERERGFSYMQDAPLDMRMDRRSGFSARDIVNDYSEKELERIIKEYGEDRWARRIAQFIVQERELAPIETTHQMVEVIKKAVPKGARKDGPHPAKRTFQAIRIEVNQELEIIEATIEAAAKHMKPGGRIAIISFHSLEDRIVKNVFRRLQNPCVCPPQFPVCKCEKEQMVKIVTRKPILPSEAELEVNPRSRSAKLRVAERV</sequence>
<dbReference type="EC" id="2.1.1.199" evidence="1"/>
<dbReference type="EMBL" id="CP000724">
    <property type="protein sequence ID" value="ABR49037.1"/>
    <property type="molecule type" value="Genomic_DNA"/>
</dbReference>
<dbReference type="RefSeq" id="WP_012064005.1">
    <property type="nucleotide sequence ID" value="NC_009633.1"/>
</dbReference>
<dbReference type="SMR" id="A6TS69"/>
<dbReference type="STRING" id="293826.Amet_2887"/>
<dbReference type="KEGG" id="amt:Amet_2887"/>
<dbReference type="eggNOG" id="COG0275">
    <property type="taxonomic scope" value="Bacteria"/>
</dbReference>
<dbReference type="HOGENOM" id="CLU_038422_2_0_9"/>
<dbReference type="OrthoDB" id="9806637at2"/>
<dbReference type="Proteomes" id="UP000001572">
    <property type="component" value="Chromosome"/>
</dbReference>
<dbReference type="GO" id="GO:0005737">
    <property type="term" value="C:cytoplasm"/>
    <property type="evidence" value="ECO:0007669"/>
    <property type="project" value="UniProtKB-SubCell"/>
</dbReference>
<dbReference type="GO" id="GO:0071424">
    <property type="term" value="F:rRNA (cytosine-N4-)-methyltransferase activity"/>
    <property type="evidence" value="ECO:0007669"/>
    <property type="project" value="UniProtKB-UniRule"/>
</dbReference>
<dbReference type="GO" id="GO:0070475">
    <property type="term" value="P:rRNA base methylation"/>
    <property type="evidence" value="ECO:0007669"/>
    <property type="project" value="UniProtKB-UniRule"/>
</dbReference>
<dbReference type="FunFam" id="1.10.150.170:FF:000001">
    <property type="entry name" value="Ribosomal RNA small subunit methyltransferase H"/>
    <property type="match status" value="1"/>
</dbReference>
<dbReference type="Gene3D" id="1.10.150.170">
    <property type="entry name" value="Putative methyltransferase TM0872, insert domain"/>
    <property type="match status" value="1"/>
</dbReference>
<dbReference type="Gene3D" id="3.40.50.150">
    <property type="entry name" value="Vaccinia Virus protein VP39"/>
    <property type="match status" value="1"/>
</dbReference>
<dbReference type="HAMAP" id="MF_01007">
    <property type="entry name" value="16SrRNA_methyltr_H"/>
    <property type="match status" value="1"/>
</dbReference>
<dbReference type="InterPro" id="IPR002903">
    <property type="entry name" value="RsmH"/>
</dbReference>
<dbReference type="InterPro" id="IPR023397">
    <property type="entry name" value="SAM-dep_MeTrfase_MraW_recog"/>
</dbReference>
<dbReference type="InterPro" id="IPR029063">
    <property type="entry name" value="SAM-dependent_MTases_sf"/>
</dbReference>
<dbReference type="NCBIfam" id="TIGR00006">
    <property type="entry name" value="16S rRNA (cytosine(1402)-N(4))-methyltransferase RsmH"/>
    <property type="match status" value="1"/>
</dbReference>
<dbReference type="PANTHER" id="PTHR11265:SF0">
    <property type="entry name" value="12S RRNA N4-METHYLCYTIDINE METHYLTRANSFERASE"/>
    <property type="match status" value="1"/>
</dbReference>
<dbReference type="PANTHER" id="PTHR11265">
    <property type="entry name" value="S-ADENOSYL-METHYLTRANSFERASE MRAW"/>
    <property type="match status" value="1"/>
</dbReference>
<dbReference type="Pfam" id="PF01795">
    <property type="entry name" value="Methyltransf_5"/>
    <property type="match status" value="1"/>
</dbReference>
<dbReference type="PIRSF" id="PIRSF004486">
    <property type="entry name" value="MraW"/>
    <property type="match status" value="1"/>
</dbReference>
<dbReference type="SUPFAM" id="SSF81799">
    <property type="entry name" value="Putative methyltransferase TM0872, insert domain"/>
    <property type="match status" value="1"/>
</dbReference>
<dbReference type="SUPFAM" id="SSF53335">
    <property type="entry name" value="S-adenosyl-L-methionine-dependent methyltransferases"/>
    <property type="match status" value="1"/>
</dbReference>